<accession>Q8U442</accession>
<feature type="chain" id="PRO_0000137652" description="Small ribosomal subunit protein eS24">
    <location>
        <begin position="1"/>
        <end position="99"/>
    </location>
</feature>
<evidence type="ECO:0000255" key="1">
    <source>
        <dbReference type="HAMAP-Rule" id="MF_00545"/>
    </source>
</evidence>
<evidence type="ECO:0000269" key="2">
    <source>
    </source>
</evidence>
<evidence type="ECO:0007744" key="3">
    <source>
        <dbReference type="PDB" id="4V6U"/>
    </source>
</evidence>
<dbReference type="EMBL" id="AE009950">
    <property type="protein sequence ID" value="AAL80377.1"/>
    <property type="molecule type" value="Genomic_DNA"/>
</dbReference>
<dbReference type="RefSeq" id="WP_011011368.1">
    <property type="nucleotide sequence ID" value="NZ_CP023154.1"/>
</dbReference>
<dbReference type="PDB" id="4V4N">
    <property type="method" value="EM"/>
    <property type="resolution" value="9.00 A"/>
    <property type="chains" value="V=1-99"/>
</dbReference>
<dbReference type="PDB" id="4V6U">
    <property type="method" value="EM"/>
    <property type="resolution" value="6.60 A"/>
    <property type="chains" value="AV/B6=1-99"/>
</dbReference>
<dbReference type="PDB" id="5JB3">
    <property type="method" value="EM"/>
    <property type="resolution" value="5.34 A"/>
    <property type="chains" value="V=1-99"/>
</dbReference>
<dbReference type="PDB" id="5JBH">
    <property type="method" value="EM"/>
    <property type="resolution" value="5.34 A"/>
    <property type="chains" value="V=1-99"/>
</dbReference>
<dbReference type="PDBsum" id="4V4N"/>
<dbReference type="PDBsum" id="4V6U"/>
<dbReference type="PDBsum" id="5JB3"/>
<dbReference type="PDBsum" id="5JBH"/>
<dbReference type="EMDB" id="EMD-50611"/>
<dbReference type="EMDB" id="EMD-50612"/>
<dbReference type="EMDB" id="EMD-50613"/>
<dbReference type="EMDB" id="EMD-8149"/>
<dbReference type="SMR" id="Q8U442"/>
<dbReference type="STRING" id="186497.PF0253"/>
<dbReference type="PaxDb" id="186497-PF0253"/>
<dbReference type="KEGG" id="pfu:PF0253"/>
<dbReference type="PATRIC" id="fig|186497.12.peg.265"/>
<dbReference type="eggNOG" id="arCOG04182">
    <property type="taxonomic scope" value="Archaea"/>
</dbReference>
<dbReference type="HOGENOM" id="CLU_107248_3_2_2"/>
<dbReference type="OrthoDB" id="27533at2157"/>
<dbReference type="PhylomeDB" id="Q8U442"/>
<dbReference type="Proteomes" id="UP000001013">
    <property type="component" value="Chromosome"/>
</dbReference>
<dbReference type="GO" id="GO:1990904">
    <property type="term" value="C:ribonucleoprotein complex"/>
    <property type="evidence" value="ECO:0007669"/>
    <property type="project" value="UniProtKB-KW"/>
</dbReference>
<dbReference type="GO" id="GO:0005840">
    <property type="term" value="C:ribosome"/>
    <property type="evidence" value="ECO:0007669"/>
    <property type="project" value="UniProtKB-KW"/>
</dbReference>
<dbReference type="GO" id="GO:0019843">
    <property type="term" value="F:rRNA binding"/>
    <property type="evidence" value="ECO:0007669"/>
    <property type="project" value="UniProtKB-KW"/>
</dbReference>
<dbReference type="GO" id="GO:0003735">
    <property type="term" value="F:structural constituent of ribosome"/>
    <property type="evidence" value="ECO:0007669"/>
    <property type="project" value="InterPro"/>
</dbReference>
<dbReference type="GO" id="GO:0006412">
    <property type="term" value="P:translation"/>
    <property type="evidence" value="ECO:0007669"/>
    <property type="project" value="UniProtKB-UniRule"/>
</dbReference>
<dbReference type="Gene3D" id="3.30.70.330">
    <property type="match status" value="1"/>
</dbReference>
<dbReference type="HAMAP" id="MF_00545">
    <property type="entry name" value="Ribosomal_eS24"/>
    <property type="match status" value="1"/>
</dbReference>
<dbReference type="InterPro" id="IPR012677">
    <property type="entry name" value="Nucleotide-bd_a/b_plait_sf"/>
</dbReference>
<dbReference type="InterPro" id="IPR001976">
    <property type="entry name" value="Ribosomal_eS24"/>
</dbReference>
<dbReference type="InterPro" id="IPR018098">
    <property type="entry name" value="Ribosomal_eS24_CS"/>
</dbReference>
<dbReference type="InterPro" id="IPR012678">
    <property type="entry name" value="Ribosomal_uL23/eL15/eS24_sf"/>
</dbReference>
<dbReference type="PANTHER" id="PTHR10496">
    <property type="entry name" value="40S RIBOSOMAL PROTEIN S24"/>
    <property type="match status" value="1"/>
</dbReference>
<dbReference type="Pfam" id="PF01282">
    <property type="entry name" value="Ribosomal_S24e"/>
    <property type="match status" value="1"/>
</dbReference>
<dbReference type="SUPFAM" id="SSF54189">
    <property type="entry name" value="Ribosomal proteins S24e, L23 and L15e"/>
    <property type="match status" value="1"/>
</dbReference>
<dbReference type="PROSITE" id="PS00529">
    <property type="entry name" value="RIBOSOMAL_S24E"/>
    <property type="match status" value="1"/>
</dbReference>
<sequence>MEIRIKEIKENKLIGRKEIYFEIYHPGEPTPSRKDVKGKLVAMLDLNPETTVIQYIRSYFGSYISKGYAKAYDSKERMLYIEPEYILIRDGLIEKKEGE</sequence>
<proteinExistence type="evidence at protein level"/>
<organism>
    <name type="scientific">Pyrococcus furiosus (strain ATCC 43587 / DSM 3638 / JCM 8422 / Vc1)</name>
    <dbReference type="NCBI Taxonomy" id="186497"/>
    <lineage>
        <taxon>Archaea</taxon>
        <taxon>Methanobacteriati</taxon>
        <taxon>Methanobacteriota</taxon>
        <taxon>Thermococci</taxon>
        <taxon>Thermococcales</taxon>
        <taxon>Thermococcaceae</taxon>
        <taxon>Pyrococcus</taxon>
    </lineage>
</organism>
<gene>
    <name evidence="1" type="primary">rps24e</name>
    <name type="ordered locus">PF0253</name>
</gene>
<protein>
    <recommendedName>
        <fullName evidence="1">Small ribosomal subunit protein eS24</fullName>
    </recommendedName>
    <alternativeName>
        <fullName>30S ribosomal protein S24e</fullName>
    </alternativeName>
</protein>
<reference key="1">
    <citation type="journal article" date="1999" name="Genetics">
        <title>Divergence of the hyperthermophilic archaea Pyrococcus furiosus and P. horikoshii inferred from complete genomic sequences.</title>
        <authorList>
            <person name="Maeder D.L."/>
            <person name="Weiss R.B."/>
            <person name="Dunn D.M."/>
            <person name="Cherry J.L."/>
            <person name="Gonzalez J.M."/>
            <person name="DiRuggiero J."/>
            <person name="Robb F.T."/>
        </authorList>
    </citation>
    <scope>NUCLEOTIDE SEQUENCE [LARGE SCALE GENOMIC DNA]</scope>
    <source>
        <strain>ATCC 43587 / DSM 3638 / JCM 8422 / Vc1</strain>
    </source>
</reference>
<reference evidence="3" key="2">
    <citation type="journal article" date="2013" name="Nucleic Acids Res.">
        <title>Promiscuous behaviour of archaeal ribosomal proteins: implications for eukaryotic ribosome evolution.</title>
        <authorList>
            <person name="Armache J.P."/>
            <person name="Anger A.M."/>
            <person name="Marquez V."/>
            <person name="Franckenberg S."/>
            <person name="Frohlich T."/>
            <person name="Villa E."/>
            <person name="Berninghausen O."/>
            <person name="Thomm M."/>
            <person name="Arnold G.J."/>
            <person name="Beckmann R."/>
            <person name="Wilson D.N."/>
        </authorList>
    </citation>
    <scope>STRUCTURE BY ELECTRON MICROSCOPY (6.60 ANGSTROMS) IN THE 70S RIBOSOME</scope>
    <scope>SUBUNIT</scope>
</reference>
<keyword id="KW-0002">3D-structure</keyword>
<keyword id="KW-1185">Reference proteome</keyword>
<keyword id="KW-0687">Ribonucleoprotein</keyword>
<keyword id="KW-0689">Ribosomal protein</keyword>
<keyword id="KW-0694">RNA-binding</keyword>
<keyword id="KW-0699">rRNA-binding</keyword>
<name>RS24_PYRFU</name>
<comment type="subunit">
    <text evidence="2">May be present in 2 copies per 70S ribosome (PubMed:23222135). Part of the 30S ribosomal subunit, where it binds 16S rRNA at its canonical site at the bse of the body, as well as a possible second 50S binding site near 23S rRNA helix 45 (PubMed:23222135).</text>
</comment>
<comment type="similarity">
    <text evidence="1">Belongs to the eukaryotic ribosomal protein eS24 family.</text>
</comment>